<evidence type="ECO:0000255" key="1">
    <source>
        <dbReference type="HAMAP-Rule" id="MF_00318"/>
    </source>
</evidence>
<keyword id="KW-0963">Cytoplasm</keyword>
<keyword id="KW-0324">Glycolysis</keyword>
<keyword id="KW-0456">Lyase</keyword>
<keyword id="KW-0460">Magnesium</keyword>
<keyword id="KW-0479">Metal-binding</keyword>
<keyword id="KW-1185">Reference proteome</keyword>
<keyword id="KW-0964">Secreted</keyword>
<gene>
    <name evidence="1" type="primary">eno</name>
    <name type="ordered locus">MK1647</name>
</gene>
<accession>Q8TUV6</accession>
<sequence>MPRIVSVKAREVLDSRGEPTVEVEVELEDGTVGRAMVPSGASTGTYEALELRDGDDRYGGKGVRRAVRNVEEIIAPEIEGLDATAQPDIDRTMIELDGTENKSHLGANAILGVSLAVARAAAKSLGIPLYRYLGGPTARRLPVPFMNVINGGEHAGNELDFQEHMIVPHGFESFSEALRAGVETYHVLGELLEEEYGPIATNVGDEGGYAPPMKDTVEPLDVLVEAIEEAGYAPGKEIALALDAAASEFYDEDSGTYRAYGQKYTRDELIDVYKDLVSQYPIVSIEDPLHEEDFRGFAKITEELGDKVQIVGDDLFVTNPDRLRKGIEMGAANALLLKVNQIGTLTEAVEAGELALQHGYGVMVSHRSGDTEDPFIADLAVALGCGQIKTGAPARSSRTAKYNRLLRIEEDLAGAAEFGPRNDFFLP</sequence>
<feature type="chain" id="PRO_0000134025" description="Enolase">
    <location>
        <begin position="1"/>
        <end position="427"/>
    </location>
</feature>
<feature type="active site" description="Proton donor" evidence="1">
    <location>
        <position position="206"/>
    </location>
</feature>
<feature type="active site" description="Proton acceptor" evidence="1">
    <location>
        <position position="338"/>
    </location>
</feature>
<feature type="binding site" evidence="1">
    <location>
        <position position="162"/>
    </location>
    <ligand>
        <name>(2R)-2-phosphoglycerate</name>
        <dbReference type="ChEBI" id="CHEBI:58289"/>
    </ligand>
</feature>
<feature type="binding site" evidence="1">
    <location>
        <position position="243"/>
    </location>
    <ligand>
        <name>Mg(2+)</name>
        <dbReference type="ChEBI" id="CHEBI:18420"/>
    </ligand>
</feature>
<feature type="binding site" evidence="1">
    <location>
        <position position="286"/>
    </location>
    <ligand>
        <name>Mg(2+)</name>
        <dbReference type="ChEBI" id="CHEBI:18420"/>
    </ligand>
</feature>
<feature type="binding site" evidence="1">
    <location>
        <position position="313"/>
    </location>
    <ligand>
        <name>Mg(2+)</name>
        <dbReference type="ChEBI" id="CHEBI:18420"/>
    </ligand>
</feature>
<feature type="binding site" evidence="1">
    <location>
        <position position="338"/>
    </location>
    <ligand>
        <name>(2R)-2-phosphoglycerate</name>
        <dbReference type="ChEBI" id="CHEBI:58289"/>
    </ligand>
</feature>
<feature type="binding site" evidence="1">
    <location>
        <position position="367"/>
    </location>
    <ligand>
        <name>(2R)-2-phosphoglycerate</name>
        <dbReference type="ChEBI" id="CHEBI:58289"/>
    </ligand>
</feature>
<feature type="binding site" evidence="1">
    <location>
        <position position="368"/>
    </location>
    <ligand>
        <name>(2R)-2-phosphoglycerate</name>
        <dbReference type="ChEBI" id="CHEBI:58289"/>
    </ligand>
</feature>
<feature type="binding site" evidence="1">
    <location>
        <position position="389"/>
    </location>
    <ligand>
        <name>(2R)-2-phosphoglycerate</name>
        <dbReference type="ChEBI" id="CHEBI:58289"/>
    </ligand>
</feature>
<dbReference type="EC" id="4.2.1.11" evidence="1"/>
<dbReference type="EMBL" id="AE009439">
    <property type="protein sequence ID" value="AAM02860.1"/>
    <property type="molecule type" value="Genomic_DNA"/>
</dbReference>
<dbReference type="RefSeq" id="WP_011020015.1">
    <property type="nucleotide sequence ID" value="NC_003551.1"/>
</dbReference>
<dbReference type="SMR" id="Q8TUV6"/>
<dbReference type="FunCoup" id="Q8TUV6">
    <property type="interactions" value="187"/>
</dbReference>
<dbReference type="STRING" id="190192.MK1647"/>
<dbReference type="PaxDb" id="190192-MK1647"/>
<dbReference type="EnsemblBacteria" id="AAM02860">
    <property type="protein sequence ID" value="AAM02860"/>
    <property type="gene ID" value="MK1647"/>
</dbReference>
<dbReference type="GeneID" id="1478242"/>
<dbReference type="KEGG" id="mka:MK1647"/>
<dbReference type="PATRIC" id="fig|190192.8.peg.1810"/>
<dbReference type="HOGENOM" id="CLU_031223_2_1_2"/>
<dbReference type="InParanoid" id="Q8TUV6"/>
<dbReference type="OrthoDB" id="8680at2157"/>
<dbReference type="UniPathway" id="UPA00109">
    <property type="reaction ID" value="UER00187"/>
</dbReference>
<dbReference type="Proteomes" id="UP000001826">
    <property type="component" value="Chromosome"/>
</dbReference>
<dbReference type="GO" id="GO:0009986">
    <property type="term" value="C:cell surface"/>
    <property type="evidence" value="ECO:0007669"/>
    <property type="project" value="UniProtKB-SubCell"/>
</dbReference>
<dbReference type="GO" id="GO:0005576">
    <property type="term" value="C:extracellular region"/>
    <property type="evidence" value="ECO:0007669"/>
    <property type="project" value="UniProtKB-SubCell"/>
</dbReference>
<dbReference type="GO" id="GO:0000015">
    <property type="term" value="C:phosphopyruvate hydratase complex"/>
    <property type="evidence" value="ECO:0007669"/>
    <property type="project" value="InterPro"/>
</dbReference>
<dbReference type="GO" id="GO:0000287">
    <property type="term" value="F:magnesium ion binding"/>
    <property type="evidence" value="ECO:0007669"/>
    <property type="project" value="UniProtKB-UniRule"/>
</dbReference>
<dbReference type="GO" id="GO:0004634">
    <property type="term" value="F:phosphopyruvate hydratase activity"/>
    <property type="evidence" value="ECO:0007669"/>
    <property type="project" value="UniProtKB-UniRule"/>
</dbReference>
<dbReference type="GO" id="GO:0006096">
    <property type="term" value="P:glycolytic process"/>
    <property type="evidence" value="ECO:0007669"/>
    <property type="project" value="UniProtKB-UniRule"/>
</dbReference>
<dbReference type="CDD" id="cd03313">
    <property type="entry name" value="enolase"/>
    <property type="match status" value="1"/>
</dbReference>
<dbReference type="FunFam" id="3.30.390.10:FF:000001">
    <property type="entry name" value="Enolase"/>
    <property type="match status" value="1"/>
</dbReference>
<dbReference type="Gene3D" id="3.20.20.120">
    <property type="entry name" value="Enolase-like C-terminal domain"/>
    <property type="match status" value="1"/>
</dbReference>
<dbReference type="Gene3D" id="3.30.390.10">
    <property type="entry name" value="Enolase-like, N-terminal domain"/>
    <property type="match status" value="1"/>
</dbReference>
<dbReference type="HAMAP" id="MF_00318">
    <property type="entry name" value="Enolase"/>
    <property type="match status" value="1"/>
</dbReference>
<dbReference type="InterPro" id="IPR000941">
    <property type="entry name" value="Enolase"/>
</dbReference>
<dbReference type="InterPro" id="IPR036849">
    <property type="entry name" value="Enolase-like_C_sf"/>
</dbReference>
<dbReference type="InterPro" id="IPR029017">
    <property type="entry name" value="Enolase-like_N"/>
</dbReference>
<dbReference type="InterPro" id="IPR020810">
    <property type="entry name" value="Enolase_C"/>
</dbReference>
<dbReference type="InterPro" id="IPR020809">
    <property type="entry name" value="Enolase_CS"/>
</dbReference>
<dbReference type="InterPro" id="IPR020811">
    <property type="entry name" value="Enolase_N"/>
</dbReference>
<dbReference type="NCBIfam" id="TIGR01060">
    <property type="entry name" value="eno"/>
    <property type="match status" value="1"/>
</dbReference>
<dbReference type="PANTHER" id="PTHR11902">
    <property type="entry name" value="ENOLASE"/>
    <property type="match status" value="1"/>
</dbReference>
<dbReference type="PANTHER" id="PTHR11902:SF1">
    <property type="entry name" value="ENOLASE"/>
    <property type="match status" value="1"/>
</dbReference>
<dbReference type="Pfam" id="PF00113">
    <property type="entry name" value="Enolase_C"/>
    <property type="match status" value="1"/>
</dbReference>
<dbReference type="Pfam" id="PF03952">
    <property type="entry name" value="Enolase_N"/>
    <property type="match status" value="1"/>
</dbReference>
<dbReference type="PIRSF" id="PIRSF001400">
    <property type="entry name" value="Enolase"/>
    <property type="match status" value="1"/>
</dbReference>
<dbReference type="PRINTS" id="PR00148">
    <property type="entry name" value="ENOLASE"/>
</dbReference>
<dbReference type="SFLD" id="SFLDS00001">
    <property type="entry name" value="Enolase"/>
    <property type="match status" value="1"/>
</dbReference>
<dbReference type="SFLD" id="SFLDF00002">
    <property type="entry name" value="enolase"/>
    <property type="match status" value="1"/>
</dbReference>
<dbReference type="SMART" id="SM01192">
    <property type="entry name" value="Enolase_C"/>
    <property type="match status" value="1"/>
</dbReference>
<dbReference type="SMART" id="SM01193">
    <property type="entry name" value="Enolase_N"/>
    <property type="match status" value="1"/>
</dbReference>
<dbReference type="SUPFAM" id="SSF51604">
    <property type="entry name" value="Enolase C-terminal domain-like"/>
    <property type="match status" value="1"/>
</dbReference>
<dbReference type="SUPFAM" id="SSF54826">
    <property type="entry name" value="Enolase N-terminal domain-like"/>
    <property type="match status" value="1"/>
</dbReference>
<dbReference type="PROSITE" id="PS00164">
    <property type="entry name" value="ENOLASE"/>
    <property type="match status" value="1"/>
</dbReference>
<comment type="function">
    <text evidence="1">Catalyzes the reversible conversion of 2-phosphoglycerate (2-PG) into phosphoenolpyruvate (PEP). It is essential for the degradation of carbohydrates via glycolysis.</text>
</comment>
<comment type="catalytic activity">
    <reaction evidence="1">
        <text>(2R)-2-phosphoglycerate = phosphoenolpyruvate + H2O</text>
        <dbReference type="Rhea" id="RHEA:10164"/>
        <dbReference type="ChEBI" id="CHEBI:15377"/>
        <dbReference type="ChEBI" id="CHEBI:58289"/>
        <dbReference type="ChEBI" id="CHEBI:58702"/>
        <dbReference type="EC" id="4.2.1.11"/>
    </reaction>
</comment>
<comment type="cofactor">
    <cofactor evidence="1">
        <name>Mg(2+)</name>
        <dbReference type="ChEBI" id="CHEBI:18420"/>
    </cofactor>
    <text evidence="1">Binds a second Mg(2+) ion via substrate during catalysis.</text>
</comment>
<comment type="pathway">
    <text evidence="1">Carbohydrate degradation; glycolysis; pyruvate from D-glyceraldehyde 3-phosphate: step 4/5.</text>
</comment>
<comment type="subcellular location">
    <subcellularLocation>
        <location evidence="1">Cytoplasm</location>
    </subcellularLocation>
    <subcellularLocation>
        <location evidence="1">Secreted</location>
    </subcellularLocation>
    <subcellularLocation>
        <location evidence="1">Cell surface</location>
    </subcellularLocation>
    <text evidence="1">Fractions of enolase are present in both the cytoplasm and on the cell surface.</text>
</comment>
<comment type="similarity">
    <text evidence="1">Belongs to the enolase family.</text>
</comment>
<proteinExistence type="inferred from homology"/>
<reference key="1">
    <citation type="journal article" date="2002" name="Proc. Natl. Acad. Sci. U.S.A.">
        <title>The complete genome of hyperthermophile Methanopyrus kandleri AV19 and monophyly of archaeal methanogens.</title>
        <authorList>
            <person name="Slesarev A.I."/>
            <person name="Mezhevaya K.V."/>
            <person name="Makarova K.S."/>
            <person name="Polushin N.N."/>
            <person name="Shcherbinina O.V."/>
            <person name="Shakhova V.V."/>
            <person name="Belova G.I."/>
            <person name="Aravind L."/>
            <person name="Natale D.A."/>
            <person name="Rogozin I.B."/>
            <person name="Tatusov R.L."/>
            <person name="Wolf Y.I."/>
            <person name="Stetter K.O."/>
            <person name="Malykh A.G."/>
            <person name="Koonin E.V."/>
            <person name="Kozyavkin S.A."/>
        </authorList>
    </citation>
    <scope>NUCLEOTIDE SEQUENCE [LARGE SCALE GENOMIC DNA]</scope>
    <source>
        <strain>AV19 / DSM 6324 / JCM 9639 / NBRC 100938</strain>
    </source>
</reference>
<organism>
    <name type="scientific">Methanopyrus kandleri (strain AV19 / DSM 6324 / JCM 9639 / NBRC 100938)</name>
    <dbReference type="NCBI Taxonomy" id="190192"/>
    <lineage>
        <taxon>Archaea</taxon>
        <taxon>Methanobacteriati</taxon>
        <taxon>Methanobacteriota</taxon>
        <taxon>Methanomada group</taxon>
        <taxon>Methanopyri</taxon>
        <taxon>Methanopyrales</taxon>
        <taxon>Methanopyraceae</taxon>
        <taxon>Methanopyrus</taxon>
    </lineage>
</organism>
<name>ENO_METKA</name>
<protein>
    <recommendedName>
        <fullName evidence="1">Enolase</fullName>
        <ecNumber evidence="1">4.2.1.11</ecNumber>
    </recommendedName>
    <alternativeName>
        <fullName evidence="1">2-phospho-D-glycerate hydro-lyase</fullName>
    </alternativeName>
    <alternativeName>
        <fullName evidence="1">2-phosphoglycerate dehydratase</fullName>
    </alternativeName>
</protein>